<reference key="1">
    <citation type="journal article" date="1982" name="J. Mol. Biol.">
        <title>Nucleotide sequence of bacteriophage lambda DNA.</title>
        <authorList>
            <person name="Sanger F."/>
            <person name="Coulson A.R."/>
            <person name="Hong G.F."/>
            <person name="Hill D.F."/>
            <person name="Petersen G.B."/>
        </authorList>
    </citation>
    <scope>NUCLEOTIDE SEQUENCE [LARGE SCALE GENOMIC DNA]</scope>
</reference>
<organism>
    <name type="scientific">Escherichia phage lambda</name>
    <name type="common">Bacteriophage lambda</name>
    <dbReference type="NCBI Taxonomy" id="2681611"/>
    <lineage>
        <taxon>Viruses</taxon>
        <taxon>Duplodnaviria</taxon>
        <taxon>Heunggongvirae</taxon>
        <taxon>Uroviricota</taxon>
        <taxon>Caudoviricetes</taxon>
        <taxon>Lambdavirus</taxon>
        <taxon>Lambdavirus lambda</taxon>
    </lineage>
</organism>
<dbReference type="EMBL" id="J02459">
    <property type="protein sequence ID" value="AAA96592.1"/>
    <property type="molecule type" value="Genomic_DNA"/>
</dbReference>
<dbReference type="PIR" id="E43011">
    <property type="entry name" value="QXBP9L"/>
</dbReference>
<dbReference type="RefSeq" id="NP_040639.1">
    <property type="nucleotide sequence ID" value="NC_001416.1"/>
</dbReference>
<dbReference type="SMR" id="P03770"/>
<dbReference type="GeneID" id="2703474"/>
<dbReference type="KEGG" id="vg:2703474"/>
<dbReference type="Proteomes" id="UP000001711">
    <property type="component" value="Genome"/>
</dbReference>
<dbReference type="InterPro" id="IPR008713">
    <property type="entry name" value="Phage_lambda_NinG"/>
</dbReference>
<dbReference type="Pfam" id="PF05766">
    <property type="entry name" value="NinG"/>
    <property type="match status" value="1"/>
</dbReference>
<evidence type="ECO:0000256" key="1">
    <source>
        <dbReference type="SAM" id="MobiDB-lite"/>
    </source>
</evidence>
<evidence type="ECO:0000305" key="2"/>
<sequence length="204" mass="24116">MMAKPARRRCKNDECREWFHPAFANQWWCSPECGTKIALERRSKEREKAEKAAEKKRRREEQKQKDKLKIRKLALKPRSYWIKQAQQAVNAFIRERDRDLPCISCGTLTSAQWDAGHYRTTAAAPQLRFNERNIHKQCVVCNQHKSGNLVPYRVELISRIGQEAVDEIESNHNRHRWTIEECKAIKAEYQQKLKDLRNSRSEAA</sequence>
<comment type="similarity">
    <text evidence="2">Belongs to the ninG family.</text>
</comment>
<protein>
    <recommendedName>
        <fullName>Protein ninG</fullName>
    </recommendedName>
</protein>
<gene>
    <name type="primary">ninG</name>
</gene>
<accession>P03770</accession>
<feature type="chain" id="PRO_0000077626" description="Protein ninG">
    <location>
        <begin position="1"/>
        <end position="204"/>
    </location>
</feature>
<feature type="region of interest" description="Disordered" evidence="1">
    <location>
        <begin position="40"/>
        <end position="66"/>
    </location>
</feature>
<proteinExistence type="inferred from homology"/>
<name>NING_LAMBD</name>
<organismHost>
    <name type="scientific">Escherichia coli</name>
    <dbReference type="NCBI Taxonomy" id="562"/>
</organismHost>
<keyword id="KW-1185">Reference proteome</keyword>